<proteinExistence type="evidence at protein level"/>
<comment type="function">
    <text evidence="1 6">May influence APP processing, resulting in a decrease in sAPP-alpha production and increased amyloidogenic P3 peptide production. May regulate ITCH and NEDD4 E3 ligase activity and degradation (PubMed:26854353).</text>
</comment>
<comment type="function">
    <text evidence="7 8 9">(Microbial infection) Acts as a receptor for Venezuelan equine encephalitis virus.</text>
</comment>
<comment type="subunit">
    <text evidence="1 6">Interacts with APP precursor C-terminus. Interacts directly with ITCH; this interaction promotes ITCH auto-ubiquitination leading to its degradation (PubMed:26854353). Interacts directly with NEDD4; this interaction promotes NEDD4 auto-ubiquitination (PubMed:26854353). Interacts directly with NEDD4L (PubMed:26854353).</text>
</comment>
<comment type="subunit">
    <text evidence="8 9">(Microbial infection) Interacts (via domain LDL-receptor class A 1) with Venezuelan equine encephalitis virus/VEEV spike proteins E1 and E2.</text>
</comment>
<comment type="subcellular location">
    <subcellularLocation>
        <location evidence="7 8 9">Cell membrane</location>
        <topology evidence="1">Single-pass type I membrane protein</topology>
    </subcellularLocation>
</comment>
<comment type="alternative products">
    <event type="alternative splicing"/>
    <isoform>
        <id>Q86YD5-1</id>
        <name>1</name>
        <sequence type="displayed"/>
    </isoform>
    <isoform>
        <id>Q86YD5-2</id>
        <name>2</name>
        <sequence type="described" ref="VSP_056254"/>
    </isoform>
</comment>
<comment type="tissue specificity">
    <text evidence="5">Expressed at high levels in brain, lung, skeletal muscle, and pancreas. Expressed at moderate levels in heart, placenta, and kidney but not detected in the liver.</text>
</comment>
<comment type="similarity">
    <text evidence="12">Belongs to the LDLR family.</text>
</comment>
<accession>Q86YD5</accession>
<accession>B7Z1U3</accession>
<accession>B9EG81</accession>
<accession>Q8NBJ0</accession>
<sequence>MWLLGPLCLLLSSAAESQLLPGNNFTNECNIPGNFMCSNGRCIPGAWQCDGLPDCFDKSDEKECPKAKSKCGPTFFPCASGIHCIIGRFRCNGFEDCPDGSDEENCTANPLLCSTARYHCKNGLCIDKSFICDGQNNCQDNSDEESCESSQEPGSGQVFVTSENQLVYYPSITYAIIGSSVIFVLVVALLALVLHHQRKRNNLMTLPVHRLQHPVLLSRLVVLDHPHHCNVTYNVNNGIQYVASQAEQNASEVGSPPSYSEALLDQRPAWYDLPPPPYSSDTESLNQADLPPYRSRSGSANSASSQAASSLLSVEDTSHSPGQPGPQEGTAEPRDSEPSQGTEEV</sequence>
<reference key="1">
    <citation type="journal article" date="2004" name="Nat. Genet.">
        <title>Complete sequencing and characterization of 21,243 full-length human cDNAs.</title>
        <authorList>
            <person name="Ota T."/>
            <person name="Suzuki Y."/>
            <person name="Nishikawa T."/>
            <person name="Otsuki T."/>
            <person name="Sugiyama T."/>
            <person name="Irie R."/>
            <person name="Wakamatsu A."/>
            <person name="Hayashi K."/>
            <person name="Sato H."/>
            <person name="Nagai K."/>
            <person name="Kimura K."/>
            <person name="Makita H."/>
            <person name="Sekine M."/>
            <person name="Obayashi M."/>
            <person name="Nishi T."/>
            <person name="Shibahara T."/>
            <person name="Tanaka T."/>
            <person name="Ishii S."/>
            <person name="Yamamoto J."/>
            <person name="Saito K."/>
            <person name="Kawai Y."/>
            <person name="Isono Y."/>
            <person name="Nakamura Y."/>
            <person name="Nagahari K."/>
            <person name="Murakami K."/>
            <person name="Yasuda T."/>
            <person name="Iwayanagi T."/>
            <person name="Wagatsuma M."/>
            <person name="Shiratori A."/>
            <person name="Sudo H."/>
            <person name="Hosoiri T."/>
            <person name="Kaku Y."/>
            <person name="Kodaira H."/>
            <person name="Kondo H."/>
            <person name="Sugawara M."/>
            <person name="Takahashi M."/>
            <person name="Kanda K."/>
            <person name="Yokoi T."/>
            <person name="Furuya T."/>
            <person name="Kikkawa E."/>
            <person name="Omura Y."/>
            <person name="Abe K."/>
            <person name="Kamihara K."/>
            <person name="Katsuta N."/>
            <person name="Sato K."/>
            <person name="Tanikawa M."/>
            <person name="Yamazaki M."/>
            <person name="Ninomiya K."/>
            <person name="Ishibashi T."/>
            <person name="Yamashita H."/>
            <person name="Murakawa K."/>
            <person name="Fujimori K."/>
            <person name="Tanai H."/>
            <person name="Kimata M."/>
            <person name="Watanabe M."/>
            <person name="Hiraoka S."/>
            <person name="Chiba Y."/>
            <person name="Ishida S."/>
            <person name="Ono Y."/>
            <person name="Takiguchi S."/>
            <person name="Watanabe S."/>
            <person name="Yosida M."/>
            <person name="Hotuta T."/>
            <person name="Kusano J."/>
            <person name="Kanehori K."/>
            <person name="Takahashi-Fujii A."/>
            <person name="Hara H."/>
            <person name="Tanase T.-O."/>
            <person name="Nomura Y."/>
            <person name="Togiya S."/>
            <person name="Komai F."/>
            <person name="Hara R."/>
            <person name="Takeuchi K."/>
            <person name="Arita M."/>
            <person name="Imose N."/>
            <person name="Musashino K."/>
            <person name="Yuuki H."/>
            <person name="Oshima A."/>
            <person name="Sasaki N."/>
            <person name="Aotsuka S."/>
            <person name="Yoshikawa Y."/>
            <person name="Matsunawa H."/>
            <person name="Ichihara T."/>
            <person name="Shiohata N."/>
            <person name="Sano S."/>
            <person name="Moriya S."/>
            <person name="Momiyama H."/>
            <person name="Satoh N."/>
            <person name="Takami S."/>
            <person name="Terashima Y."/>
            <person name="Suzuki O."/>
            <person name="Nakagawa S."/>
            <person name="Senoh A."/>
            <person name="Mizoguchi H."/>
            <person name="Goto Y."/>
            <person name="Shimizu F."/>
            <person name="Wakebe H."/>
            <person name="Hishigaki H."/>
            <person name="Watanabe T."/>
            <person name="Sugiyama A."/>
            <person name="Takemoto M."/>
            <person name="Kawakami B."/>
            <person name="Yamazaki M."/>
            <person name="Watanabe K."/>
            <person name="Kumagai A."/>
            <person name="Itakura S."/>
            <person name="Fukuzumi Y."/>
            <person name="Fujimori Y."/>
            <person name="Komiyama M."/>
            <person name="Tashiro H."/>
            <person name="Tanigami A."/>
            <person name="Fujiwara T."/>
            <person name="Ono T."/>
            <person name="Yamada K."/>
            <person name="Fujii Y."/>
            <person name="Ozaki K."/>
            <person name="Hirao M."/>
            <person name="Ohmori Y."/>
            <person name="Kawabata A."/>
            <person name="Hikiji T."/>
            <person name="Kobatake N."/>
            <person name="Inagaki H."/>
            <person name="Ikema Y."/>
            <person name="Okamoto S."/>
            <person name="Okitani R."/>
            <person name="Kawakami T."/>
            <person name="Noguchi S."/>
            <person name="Itoh T."/>
            <person name="Shigeta K."/>
            <person name="Senba T."/>
            <person name="Matsumura K."/>
            <person name="Nakajima Y."/>
            <person name="Mizuno T."/>
            <person name="Morinaga M."/>
            <person name="Sasaki M."/>
            <person name="Togashi T."/>
            <person name="Oyama M."/>
            <person name="Hata H."/>
            <person name="Watanabe M."/>
            <person name="Komatsu T."/>
            <person name="Mizushima-Sugano J."/>
            <person name="Satoh T."/>
            <person name="Shirai Y."/>
            <person name="Takahashi Y."/>
            <person name="Nakagawa K."/>
            <person name="Okumura K."/>
            <person name="Nagase T."/>
            <person name="Nomura N."/>
            <person name="Kikuchi H."/>
            <person name="Masuho Y."/>
            <person name="Yamashita R."/>
            <person name="Nakai K."/>
            <person name="Yada T."/>
            <person name="Nakamura Y."/>
            <person name="Ohara O."/>
            <person name="Isogai T."/>
            <person name="Sugano S."/>
        </authorList>
    </citation>
    <scope>NUCLEOTIDE SEQUENCE [LARGE SCALE MRNA] (ISOFORM 2)</scope>
    <source>
        <tissue>Cerebellum</tissue>
    </source>
</reference>
<reference key="2">
    <citation type="journal article" date="2005" name="DNA Res.">
        <title>Signal sequence and keyword trap in silico for selection of full-length human cDNAs encoding secretion or membrane proteins from oligo-capped cDNA libraries.</title>
        <authorList>
            <person name="Otsuki T."/>
            <person name="Ota T."/>
            <person name="Nishikawa T."/>
            <person name="Hayashi K."/>
            <person name="Suzuki Y."/>
            <person name="Yamamoto J."/>
            <person name="Wakamatsu A."/>
            <person name="Kimura K."/>
            <person name="Sakamoto K."/>
            <person name="Hatano N."/>
            <person name="Kawai Y."/>
            <person name="Ishii S."/>
            <person name="Saito K."/>
            <person name="Kojima S."/>
            <person name="Sugiyama T."/>
            <person name="Ono T."/>
            <person name="Okano K."/>
            <person name="Yoshikawa Y."/>
            <person name="Aotsuka S."/>
            <person name="Sasaki N."/>
            <person name="Hattori A."/>
            <person name="Okumura K."/>
            <person name="Nagai K."/>
            <person name="Sugano S."/>
            <person name="Isogai T."/>
        </authorList>
    </citation>
    <scope>NUCLEOTIDE SEQUENCE [LARGE SCALE MRNA] (ISOFORM 1)</scope>
    <source>
        <tissue>Teratocarcinoma</tissue>
    </source>
</reference>
<reference key="3">
    <citation type="journal article" date="2006" name="Nature">
        <title>Human chromosome 11 DNA sequence and analysis including novel gene identification.</title>
        <authorList>
            <person name="Taylor T.D."/>
            <person name="Noguchi H."/>
            <person name="Totoki Y."/>
            <person name="Toyoda A."/>
            <person name="Kuroki Y."/>
            <person name="Dewar K."/>
            <person name="Lloyd C."/>
            <person name="Itoh T."/>
            <person name="Takeda T."/>
            <person name="Kim D.-W."/>
            <person name="She X."/>
            <person name="Barlow K.F."/>
            <person name="Bloom T."/>
            <person name="Bruford E."/>
            <person name="Chang J.L."/>
            <person name="Cuomo C.A."/>
            <person name="Eichler E."/>
            <person name="FitzGerald M.G."/>
            <person name="Jaffe D.B."/>
            <person name="LaButti K."/>
            <person name="Nicol R."/>
            <person name="Park H.-S."/>
            <person name="Seaman C."/>
            <person name="Sougnez C."/>
            <person name="Yang X."/>
            <person name="Zimmer A.R."/>
            <person name="Zody M.C."/>
            <person name="Birren B.W."/>
            <person name="Nusbaum C."/>
            <person name="Fujiyama A."/>
            <person name="Hattori M."/>
            <person name="Rogers J."/>
            <person name="Lander E.S."/>
            <person name="Sakaki Y."/>
        </authorList>
    </citation>
    <scope>NUCLEOTIDE SEQUENCE [LARGE SCALE GENOMIC DNA]</scope>
</reference>
<reference key="4">
    <citation type="submission" date="2005-09" db="EMBL/GenBank/DDBJ databases">
        <authorList>
            <person name="Mural R.J."/>
            <person name="Istrail S."/>
            <person name="Sutton G.G."/>
            <person name="Florea L."/>
            <person name="Halpern A.L."/>
            <person name="Mobarry C.M."/>
            <person name="Lippert R."/>
            <person name="Walenz B."/>
            <person name="Shatkay H."/>
            <person name="Dew I."/>
            <person name="Miller J.R."/>
            <person name="Flanigan M.J."/>
            <person name="Edwards N.J."/>
            <person name="Bolanos R."/>
            <person name="Fasulo D."/>
            <person name="Halldorsson B.V."/>
            <person name="Hannenhalli S."/>
            <person name="Turner R."/>
            <person name="Yooseph S."/>
            <person name="Lu F."/>
            <person name="Nusskern D.R."/>
            <person name="Shue B.C."/>
            <person name="Zheng X.H."/>
            <person name="Zhong F."/>
            <person name="Delcher A.L."/>
            <person name="Huson D.H."/>
            <person name="Kravitz S.A."/>
            <person name="Mouchard L."/>
            <person name="Reinert K."/>
            <person name="Remington K.A."/>
            <person name="Clark A.G."/>
            <person name="Waterman M.S."/>
            <person name="Eichler E.E."/>
            <person name="Adams M.D."/>
            <person name="Hunkapiller M.W."/>
            <person name="Myers E.W."/>
            <person name="Venter J.C."/>
        </authorList>
    </citation>
    <scope>NUCLEOTIDE SEQUENCE [LARGE SCALE GENOMIC DNA]</scope>
</reference>
<reference key="5">
    <citation type="journal article" date="2004" name="Genome Res.">
        <title>The status, quality, and expansion of the NIH full-length cDNA project: the Mammalian Gene Collection (MGC).</title>
        <authorList>
            <consortium name="The MGC Project Team"/>
        </authorList>
    </citation>
    <scope>NUCLEOTIDE SEQUENCE [LARGE SCALE MRNA] (ISOFORMS 1 AND 2)</scope>
    <source>
        <tissue>Testis</tissue>
    </source>
</reference>
<reference key="6">
    <citation type="journal article" date="2011" name="J. Neurosci.">
        <title>LRAD3, a novel low-density lipoprotein receptor family member that modulates amyloid precursor protein trafficking.</title>
        <authorList>
            <person name="Ranganathan S."/>
            <person name="Noyes N.C."/>
            <person name="Migliorini M."/>
            <person name="Winkles J.A."/>
            <person name="Battey F.D."/>
            <person name="Hyman B.T."/>
            <person name="Smith E."/>
            <person name="Yepes M."/>
            <person name="Mikhailenko I."/>
            <person name="Strickland D.K."/>
        </authorList>
    </citation>
    <scope>TISSUE SPECIFICITY</scope>
</reference>
<reference key="7">
    <citation type="journal article" date="2016" name="Biochemistry">
        <title>Regulation of Itch and Nedd4 E3 Ligase Activity and Degradation by LRAD3.</title>
        <authorList>
            <person name="Noyes N.C."/>
            <person name="Hampton B."/>
            <person name="Migliorini M."/>
            <person name="Strickland D.K."/>
        </authorList>
    </citation>
    <scope>INTERACTION WITH ITCH; NEDD4 AND NEDD4L</scope>
    <scope>MUTAGENESIS OF PRO-257; TYR-259; PRO-276; PRO-277 AND TYR-278</scope>
    <scope>MOTIF</scope>
</reference>
<reference key="8">
    <citation type="journal article" date="2020" name="Nature">
        <title>LDLRAD3 is a receptor for Venezuelan equine encephalitis virus.</title>
        <authorList>
            <person name="Ma H."/>
            <person name="Kim A.S."/>
            <person name="Kafai N.M."/>
            <person name="Earnest J.T."/>
            <person name="Shah A.P."/>
            <person name="Case J.B."/>
            <person name="Basore K."/>
            <person name="Gilliland T.C."/>
            <person name="Sun C."/>
            <person name="Nelson C.A."/>
            <person name="Thackray L.B."/>
            <person name="Klimstra W.B."/>
            <person name="Fremont D.H."/>
            <person name="Diamond M.S."/>
        </authorList>
    </citation>
    <scope>FUNCTION (MICROBIAL INFECTION)</scope>
    <scope>SUBCELLULAR LOCATION</scope>
</reference>
<reference key="9">
    <citation type="journal article" date="2021" name="Nature">
        <title>Structure of Venezuelan equine encephalitis virus in complex with the LDLRAD3 receptor.</title>
        <authorList>
            <person name="Basore K."/>
            <person name="Ma H."/>
            <person name="Kafai N.M."/>
            <person name="Mackin S."/>
            <person name="Kim A.S."/>
            <person name="Nelson C.A."/>
            <person name="Diamond M.S."/>
            <person name="Fremont D.H."/>
        </authorList>
    </citation>
    <scope>FUNCTION (MICROBIAL INFECTION)</scope>
    <scope>INTERACTION WITH VENEZUELAN EQUINE ENCEPHALITIS VIRUS SPIKE PROTEINS E1 AND E2 (MICROBIAL INFECTION)</scope>
    <scope>SUBCELLULAR LOCATION</scope>
    <scope>MUTAGENESIS OF GLY-33; MET-36; PRO-44 AND ASP-57</scope>
</reference>
<reference evidence="14 15 16" key="10">
    <citation type="journal article" date="2021" name="Nature">
        <title>Structure of Venezuelan equine encephalitis virus with its receptor LDLRAD3.</title>
        <authorList>
            <person name="Ma B."/>
            <person name="Huang C."/>
            <person name="Ma J."/>
            <person name="Xiang Y."/>
            <person name="Zhang X."/>
        </authorList>
    </citation>
    <scope>FUNCTION (MICROBIAL INFECTION)</scope>
    <scope>INTERACTION WITH VENEZUELAN EQUINE ENCEPHALITIS VIRUS SPIKE PROTEINS E1 AND E2 (MICROBIAL INFECTION)</scope>
    <scope>SUBCELLULAR LOCATION</scope>
    <scope>MUTAGENESIS OF ASP-50</scope>
    <scope>DISULFIDE BONDS</scope>
    <scope>MUTAGENESIS OF TRP-47 AND ASP-57</scope>
</reference>
<evidence type="ECO:0000250" key="1"/>
<evidence type="ECO:0000255" key="2"/>
<evidence type="ECO:0000255" key="3">
    <source>
        <dbReference type="PROSITE-ProRule" id="PRU00124"/>
    </source>
</evidence>
<evidence type="ECO:0000256" key="4">
    <source>
        <dbReference type="SAM" id="MobiDB-lite"/>
    </source>
</evidence>
<evidence type="ECO:0000269" key="5">
    <source>
    </source>
</evidence>
<evidence type="ECO:0000269" key="6">
    <source>
    </source>
</evidence>
<evidence type="ECO:0000269" key="7">
    <source>
    </source>
</evidence>
<evidence type="ECO:0000269" key="8">
    <source>
    </source>
</evidence>
<evidence type="ECO:0000269" key="9">
    <source>
    </source>
</evidence>
<evidence type="ECO:0000303" key="10">
    <source>
    </source>
</evidence>
<evidence type="ECO:0000303" key="11">
    <source>
    </source>
</evidence>
<evidence type="ECO:0000305" key="12"/>
<evidence type="ECO:0000312" key="13">
    <source>
        <dbReference type="HGNC" id="HGNC:27046"/>
    </source>
</evidence>
<evidence type="ECO:0007744" key="14">
    <source>
        <dbReference type="PDB" id="7FFF"/>
    </source>
</evidence>
<evidence type="ECO:0007744" key="15">
    <source>
        <dbReference type="PDB" id="7FFL"/>
    </source>
</evidence>
<evidence type="ECO:0007744" key="16">
    <source>
        <dbReference type="PDB" id="7FFN"/>
    </source>
</evidence>
<evidence type="ECO:0007829" key="17">
    <source>
        <dbReference type="PDB" id="7FFN"/>
    </source>
</evidence>
<protein>
    <recommendedName>
        <fullName evidence="12">Low-density lipoprotein receptor class A domain-containing protein 3</fullName>
        <shortName>LDLR class A domain-containing protein 3</shortName>
    </recommendedName>
</protein>
<feature type="signal peptide" evidence="2">
    <location>
        <begin position="1"/>
        <end position="17"/>
    </location>
</feature>
<feature type="chain" id="PRO_0000299378" description="Low-density lipoprotein receptor class A domain-containing protein 3">
    <location>
        <begin position="18"/>
        <end position="345"/>
    </location>
</feature>
<feature type="topological domain" description="Extracellular" evidence="2">
    <location>
        <begin position="18"/>
        <end position="173"/>
    </location>
</feature>
<feature type="transmembrane region" description="Helical" evidence="2">
    <location>
        <begin position="174"/>
        <end position="194"/>
    </location>
</feature>
<feature type="topological domain" description="Cytoplasmic" evidence="2">
    <location>
        <begin position="195"/>
        <end position="345"/>
    </location>
</feature>
<feature type="domain" description="LDL-receptor class A 1" evidence="3">
    <location>
        <begin position="28"/>
        <end position="65"/>
    </location>
</feature>
<feature type="domain" description="LDL-receptor class A 2" evidence="3">
    <location>
        <begin position="70"/>
        <end position="107"/>
    </location>
</feature>
<feature type="domain" description="LDL-receptor class A 3" evidence="3">
    <location>
        <begin position="112"/>
        <end position="148"/>
    </location>
</feature>
<feature type="region of interest" description="(Microbial infection) Interaction with Venezuelan equine encephalitis virus/VEEV spike proteins E1 and E2" evidence="9">
    <location>
        <begin position="30"/>
        <end position="57"/>
    </location>
</feature>
<feature type="region of interest" description="Disordered" evidence="4">
    <location>
        <begin position="270"/>
        <end position="345"/>
    </location>
</feature>
<feature type="short sequence motif" description="Involved in ITCH interaction" evidence="6">
    <location>
        <begin position="256"/>
        <end position="259"/>
    </location>
</feature>
<feature type="short sequence motif" description="Involved in ITCH interaction" evidence="6">
    <location>
        <begin position="275"/>
        <end position="278"/>
    </location>
</feature>
<feature type="compositionally biased region" description="Low complexity" evidence="4">
    <location>
        <begin position="295"/>
        <end position="313"/>
    </location>
</feature>
<feature type="glycosylation site" description="N-linked (GlcNAc...) asparagine" evidence="2">
    <location>
        <position position="24"/>
    </location>
</feature>
<feature type="disulfide bond" evidence="3 9 14 15 16">
    <location>
        <begin position="29"/>
        <end position="42"/>
    </location>
</feature>
<feature type="disulfide bond" evidence="3 9 14 15">
    <location>
        <begin position="37"/>
        <end position="55"/>
    </location>
</feature>
<feature type="disulfide bond" evidence="3 9 14 15 16">
    <location>
        <begin position="49"/>
        <end position="64"/>
    </location>
</feature>
<feature type="disulfide bond" evidence="3">
    <location>
        <begin position="71"/>
        <end position="84"/>
    </location>
</feature>
<feature type="disulfide bond" evidence="3">
    <location>
        <begin position="78"/>
        <end position="97"/>
    </location>
</feature>
<feature type="disulfide bond" evidence="3">
    <location>
        <begin position="91"/>
        <end position="106"/>
    </location>
</feature>
<feature type="disulfide bond" evidence="3">
    <location>
        <begin position="113"/>
        <end position="125"/>
    </location>
</feature>
<feature type="disulfide bond" evidence="3">
    <location>
        <begin position="120"/>
        <end position="138"/>
    </location>
</feature>
<feature type="disulfide bond" evidence="3">
    <location>
        <begin position="132"/>
        <end position="147"/>
    </location>
</feature>
<feature type="splice variant" id="VSP_056254" description="In isoform 2." evidence="10 11">
    <original>ESQLLPGNNFTNECNIPGNFMCSNGRCIPGAWQCDGLPDCFDKSDEKECP</original>
    <variation>A</variation>
    <location>
        <begin position="16"/>
        <end position="65"/>
    </location>
</feature>
<feature type="mutagenesis site" description="Loss of infection by Venezuelan equine encephalitis virus." evidence="8">
    <original>G</original>
    <variation>D</variation>
    <location>
        <position position="33"/>
    </location>
</feature>
<feature type="mutagenesis site" description="Loss of infection by Venezuelan equine encephalitis virus." evidence="8">
    <original>M</original>
    <variation>T</variation>
    <location>
        <position position="36"/>
    </location>
</feature>
<feature type="mutagenesis site" description="Loss of infection by Venezuelan equine encephalitis virus." evidence="8">
    <original>P</original>
    <variation>R</variation>
    <location>
        <position position="44"/>
    </location>
</feature>
<feature type="mutagenesis site" description="Complete loss of interaction with Venezuelan equine encephalitis virus/VEEV spike proteins E1." evidence="9">
    <original>W</original>
    <variation>G</variation>
    <variation>I</variation>
    <location>
        <position position="47"/>
    </location>
</feature>
<feature type="mutagenesis site" description="Loss of infection by Venezuelan equine encephalitis virus." evidence="9">
    <original>D</original>
    <variation>G</variation>
    <location>
        <position position="50"/>
    </location>
</feature>
<feature type="mutagenesis site" description="Complete loss of interaction with Venezuelan equine encephalitis virus/VEEV spike proteins E1." evidence="9">
    <original>D</original>
    <variation>G</variation>
    <location>
        <position position="57"/>
    </location>
</feature>
<feature type="mutagenesis site" description="Loss of infection by Venezuelan equine encephalitis virus." evidence="8">
    <original>D</original>
    <variation>V</variation>
    <location>
        <position position="57"/>
    </location>
</feature>
<feature type="mutagenesis site" description="Does not affect interaction with ITCH; when associated with A-259. Loss of interaction with ITCH; when associated with A-259; A-276; A-277 and A-278." evidence="6">
    <original>P</original>
    <variation>A</variation>
    <location>
        <position position="257"/>
    </location>
</feature>
<feature type="mutagenesis site" description="Does not affect interaction with ITCH; when associated with A-257. Loss of interaction with ITCH; when associated with A-257; A-276; A-277 and A-278." evidence="6">
    <original>Y</original>
    <variation>A</variation>
    <location>
        <position position="259"/>
    </location>
</feature>
<feature type="mutagenesis site" description="Does not affect interaction with ITCH; when associated with A-277 and A-278. Loss of interaction with ITCH; when associated with A-257; A-259; A-277 and A-278." evidence="6">
    <original>P</original>
    <variation>A</variation>
    <location>
        <position position="276"/>
    </location>
</feature>
<feature type="mutagenesis site" description="Does not affect interaction with ITCH; when associated with A-276 and A-278. Loss of interaction with ITCH; when associated with A-257; A-259; A-276 and A-278." evidence="6">
    <original>P</original>
    <variation>A</variation>
    <location>
        <position position="277"/>
    </location>
</feature>
<feature type="mutagenesis site" description="Does not affect interaction with ITCH; when associated with A-276 and A-277. Loss of interaction with ITCH; when associated with A-257; A-259; A-276 and A-277." evidence="6">
    <original>Y</original>
    <variation>A</variation>
    <location>
        <position position="278"/>
    </location>
</feature>
<feature type="sequence conflict" description="In Ref. 5; AAH42754." evidence="12" ref="5">
    <original>M</original>
    <variation>V</variation>
    <location>
        <position position="204"/>
    </location>
</feature>
<feature type="sequence conflict" description="In Ref. 5; AAH42754." evidence="12" ref="5">
    <original>H</original>
    <variation>R</variation>
    <location>
        <position position="319"/>
    </location>
</feature>
<feature type="strand" evidence="17">
    <location>
        <begin position="34"/>
        <end position="36"/>
    </location>
</feature>
<feature type="strand" evidence="17">
    <location>
        <begin position="42"/>
        <end position="44"/>
    </location>
</feature>
<feature type="helix" evidence="17">
    <location>
        <begin position="45"/>
        <end position="47"/>
    </location>
</feature>
<feature type="strand" evidence="17">
    <location>
        <begin position="50"/>
        <end position="52"/>
    </location>
</feature>
<feature type="helix" evidence="17">
    <location>
        <begin position="56"/>
        <end position="58"/>
    </location>
</feature>
<keyword id="KW-0002">3D-structure</keyword>
<keyword id="KW-0025">Alternative splicing</keyword>
<keyword id="KW-1003">Cell membrane</keyword>
<keyword id="KW-1015">Disulfide bond</keyword>
<keyword id="KW-0325">Glycoprotein</keyword>
<keyword id="KW-0945">Host-virus interaction</keyword>
<keyword id="KW-0449">Lipoprotein</keyword>
<keyword id="KW-0472">Membrane</keyword>
<keyword id="KW-1267">Proteomics identification</keyword>
<keyword id="KW-0675">Receptor</keyword>
<keyword id="KW-1185">Reference proteome</keyword>
<keyword id="KW-0677">Repeat</keyword>
<keyword id="KW-0732">Signal</keyword>
<keyword id="KW-0812">Transmembrane</keyword>
<keyword id="KW-1133">Transmembrane helix</keyword>
<dbReference type="EMBL" id="AK293930">
    <property type="protein sequence ID" value="BAH11629.1"/>
    <property type="molecule type" value="mRNA"/>
</dbReference>
<dbReference type="EMBL" id="AK075546">
    <property type="protein sequence ID" value="BAC11689.1"/>
    <property type="molecule type" value="mRNA"/>
</dbReference>
<dbReference type="EMBL" id="AC026269">
    <property type="status" value="NOT_ANNOTATED_CDS"/>
    <property type="molecule type" value="Genomic_DNA"/>
</dbReference>
<dbReference type="EMBL" id="AC087277">
    <property type="status" value="NOT_ANNOTATED_CDS"/>
    <property type="molecule type" value="Genomic_DNA"/>
</dbReference>
<dbReference type="EMBL" id="AC129502">
    <property type="status" value="NOT_ANNOTATED_CDS"/>
    <property type="molecule type" value="Genomic_DNA"/>
</dbReference>
<dbReference type="EMBL" id="AL136146">
    <property type="status" value="NOT_ANNOTATED_CDS"/>
    <property type="molecule type" value="Genomic_DNA"/>
</dbReference>
<dbReference type="EMBL" id="CH471064">
    <property type="protein sequence ID" value="EAW68127.1"/>
    <property type="molecule type" value="Genomic_DNA"/>
</dbReference>
<dbReference type="EMBL" id="BC042754">
    <property type="protein sequence ID" value="AAH42754.2"/>
    <property type="molecule type" value="mRNA"/>
</dbReference>
<dbReference type="EMBL" id="BC136286">
    <property type="protein sequence ID" value="AAI36287.1"/>
    <property type="molecule type" value="mRNA"/>
</dbReference>
<dbReference type="EMBL" id="BC143824">
    <property type="protein sequence ID" value="AAI43825.1"/>
    <property type="molecule type" value="mRNA"/>
</dbReference>
<dbReference type="CCDS" id="CCDS31462.1">
    <molecule id="Q86YD5-1"/>
</dbReference>
<dbReference type="CCDS" id="CCDS76394.1">
    <molecule id="Q86YD5-2"/>
</dbReference>
<dbReference type="RefSeq" id="NP_001291192.1">
    <molecule id="Q86YD5-2"/>
    <property type="nucleotide sequence ID" value="NM_001304263.2"/>
</dbReference>
<dbReference type="RefSeq" id="NP_001291193.1">
    <property type="nucleotide sequence ID" value="NM_001304264.1"/>
</dbReference>
<dbReference type="RefSeq" id="NP_777562.1">
    <molecule id="Q86YD5-1"/>
    <property type="nucleotide sequence ID" value="NM_174902.4"/>
</dbReference>
<dbReference type="PDB" id="7FFF">
    <property type="method" value="EM"/>
    <property type="resolution" value="3.00 A"/>
    <property type="chains" value="D/E/H/M=1-70"/>
</dbReference>
<dbReference type="PDB" id="7FFL">
    <property type="method" value="EM"/>
    <property type="resolution" value="3.10 A"/>
    <property type="chains" value="D/E/H=1-70"/>
</dbReference>
<dbReference type="PDB" id="7FFN">
    <property type="method" value="EM"/>
    <property type="resolution" value="3.00 A"/>
    <property type="chains" value="M=1-70"/>
</dbReference>
<dbReference type="PDBsum" id="7FFF"/>
<dbReference type="PDBsum" id="7FFL"/>
<dbReference type="PDBsum" id="7FFN"/>
<dbReference type="EMDB" id="EMD-31567"/>
<dbReference type="EMDB" id="EMD-31568"/>
<dbReference type="EMDB" id="EMD-31569"/>
<dbReference type="SMR" id="Q86YD5"/>
<dbReference type="BioGRID" id="126803">
    <property type="interactions" value="12"/>
</dbReference>
<dbReference type="FunCoup" id="Q86YD5">
    <property type="interactions" value="689"/>
</dbReference>
<dbReference type="IntAct" id="Q86YD5">
    <property type="interactions" value="2"/>
</dbReference>
<dbReference type="STRING" id="9606.ENSP00000318607"/>
<dbReference type="GlyCosmos" id="Q86YD5">
    <property type="glycosylation" value="1 site, No reported glycans"/>
</dbReference>
<dbReference type="GlyGen" id="Q86YD5">
    <property type="glycosylation" value="2 sites, 1 N-linked glycan (1 site)"/>
</dbReference>
<dbReference type="iPTMnet" id="Q86YD5"/>
<dbReference type="PhosphoSitePlus" id="Q86YD5"/>
<dbReference type="BioMuta" id="LDLRAD3"/>
<dbReference type="DMDM" id="269849675"/>
<dbReference type="jPOST" id="Q86YD5"/>
<dbReference type="MassIVE" id="Q86YD5"/>
<dbReference type="PaxDb" id="9606-ENSP00000318607"/>
<dbReference type="PeptideAtlas" id="Q86YD5"/>
<dbReference type="ProteomicsDB" id="6373"/>
<dbReference type="ProteomicsDB" id="70404">
    <molecule id="Q86YD5-1"/>
</dbReference>
<dbReference type="Antibodypedia" id="42763">
    <property type="antibodies" value="131 antibodies from 25 providers"/>
</dbReference>
<dbReference type="DNASU" id="143458"/>
<dbReference type="Ensembl" id="ENST00000315571.6">
    <molecule id="Q86YD5-1"/>
    <property type="protein sequence ID" value="ENSP00000318607.5"/>
    <property type="gene ID" value="ENSG00000179241.13"/>
</dbReference>
<dbReference type="Ensembl" id="ENST00000528989.5">
    <molecule id="Q86YD5-2"/>
    <property type="protein sequence ID" value="ENSP00000433954.1"/>
    <property type="gene ID" value="ENSG00000179241.13"/>
</dbReference>
<dbReference type="GeneID" id="143458"/>
<dbReference type="KEGG" id="hsa:143458"/>
<dbReference type="MANE-Select" id="ENST00000315571.6">
    <property type="protein sequence ID" value="ENSP00000318607.5"/>
    <property type="RefSeq nucleotide sequence ID" value="NM_174902.4"/>
    <property type="RefSeq protein sequence ID" value="NP_777562.1"/>
</dbReference>
<dbReference type="UCSC" id="uc001mwk.2">
    <molecule id="Q86YD5-1"/>
    <property type="organism name" value="human"/>
</dbReference>
<dbReference type="AGR" id="HGNC:27046"/>
<dbReference type="CTD" id="143458"/>
<dbReference type="DisGeNET" id="143458"/>
<dbReference type="GeneCards" id="LDLRAD3"/>
<dbReference type="HGNC" id="HGNC:27046">
    <property type="gene designation" value="LDLRAD3"/>
</dbReference>
<dbReference type="HPA" id="ENSG00000179241">
    <property type="expression patterns" value="Tissue enhanced (brain)"/>
</dbReference>
<dbReference type="MIM" id="617986">
    <property type="type" value="gene"/>
</dbReference>
<dbReference type="neXtProt" id="NX_Q86YD5"/>
<dbReference type="OpenTargets" id="ENSG00000179241"/>
<dbReference type="PharmGKB" id="PA142671556"/>
<dbReference type="VEuPathDB" id="HostDB:ENSG00000179241"/>
<dbReference type="eggNOG" id="KOG1215">
    <property type="taxonomic scope" value="Eukaryota"/>
</dbReference>
<dbReference type="GeneTree" id="ENSGT00940000160574"/>
<dbReference type="HOGENOM" id="CLU_072228_0_0_1"/>
<dbReference type="InParanoid" id="Q86YD5"/>
<dbReference type="OrthoDB" id="9988974at2759"/>
<dbReference type="PAN-GO" id="Q86YD5">
    <property type="GO annotations" value="2 GO annotations based on evolutionary models"/>
</dbReference>
<dbReference type="PhylomeDB" id="Q86YD5"/>
<dbReference type="TreeFam" id="TF332096"/>
<dbReference type="PathwayCommons" id="Q86YD5"/>
<dbReference type="BioGRID-ORCS" id="143458">
    <property type="hits" value="10 hits in 1156 CRISPR screens"/>
</dbReference>
<dbReference type="ChiTaRS" id="LDLRAD3">
    <property type="organism name" value="human"/>
</dbReference>
<dbReference type="GenomeRNAi" id="143458"/>
<dbReference type="Pharos" id="Q86YD5">
    <property type="development level" value="Tbio"/>
</dbReference>
<dbReference type="PRO" id="PR:Q86YD5"/>
<dbReference type="Proteomes" id="UP000005640">
    <property type="component" value="Chromosome 11"/>
</dbReference>
<dbReference type="RNAct" id="Q86YD5">
    <property type="molecule type" value="protein"/>
</dbReference>
<dbReference type="Bgee" id="ENSG00000179241">
    <property type="expression patterns" value="Expressed in parotid gland and 170 other cell types or tissues"/>
</dbReference>
<dbReference type="ExpressionAtlas" id="Q86YD5">
    <property type="expression patterns" value="baseline and differential"/>
</dbReference>
<dbReference type="GO" id="GO:0005886">
    <property type="term" value="C:plasma membrane"/>
    <property type="evidence" value="ECO:0000318"/>
    <property type="project" value="GO_Central"/>
</dbReference>
<dbReference type="GO" id="GO:0001540">
    <property type="term" value="F:amyloid-beta binding"/>
    <property type="evidence" value="ECO:0007669"/>
    <property type="project" value="Ensembl"/>
</dbReference>
<dbReference type="GO" id="GO:0006898">
    <property type="term" value="P:receptor-mediated endocytosis"/>
    <property type="evidence" value="ECO:0000318"/>
    <property type="project" value="GO_Central"/>
</dbReference>
<dbReference type="GO" id="GO:0070613">
    <property type="term" value="P:regulation of protein processing"/>
    <property type="evidence" value="ECO:0007669"/>
    <property type="project" value="Ensembl"/>
</dbReference>
<dbReference type="CDD" id="cd00112">
    <property type="entry name" value="LDLa"/>
    <property type="match status" value="3"/>
</dbReference>
<dbReference type="FunFam" id="4.10.400.10:FF:000104">
    <property type="entry name" value="Low-density lipoprotein receptor class A domain-containing protein 3"/>
    <property type="match status" value="1"/>
</dbReference>
<dbReference type="FunFam" id="4.10.400.10:FF:000087">
    <property type="entry name" value="low-density lipoprotein receptor class A domain-containing protein 3"/>
    <property type="match status" value="1"/>
</dbReference>
<dbReference type="Gene3D" id="4.10.400.10">
    <property type="entry name" value="Low-density Lipoprotein Receptor"/>
    <property type="match status" value="3"/>
</dbReference>
<dbReference type="InterPro" id="IPR036055">
    <property type="entry name" value="LDL_receptor-like_sf"/>
</dbReference>
<dbReference type="InterPro" id="IPR050685">
    <property type="entry name" value="LDLR"/>
</dbReference>
<dbReference type="InterPro" id="IPR023415">
    <property type="entry name" value="LDLR_class-A_CS"/>
</dbReference>
<dbReference type="InterPro" id="IPR002172">
    <property type="entry name" value="LDrepeatLR_classA_rpt"/>
</dbReference>
<dbReference type="PANTHER" id="PTHR24270:SF24">
    <property type="entry name" value="LOW-DENSITY LIPOPROTEIN RECEPTOR CLASS A DOMAIN-CONTAINING PROTEIN 3"/>
    <property type="match status" value="1"/>
</dbReference>
<dbReference type="PANTHER" id="PTHR24270">
    <property type="entry name" value="LOW-DENSITY LIPOPROTEIN RECEPTOR-RELATED"/>
    <property type="match status" value="1"/>
</dbReference>
<dbReference type="Pfam" id="PF00057">
    <property type="entry name" value="Ldl_recept_a"/>
    <property type="match status" value="3"/>
</dbReference>
<dbReference type="PRINTS" id="PR00261">
    <property type="entry name" value="LDLRECEPTOR"/>
</dbReference>
<dbReference type="SMART" id="SM00192">
    <property type="entry name" value="LDLa"/>
    <property type="match status" value="3"/>
</dbReference>
<dbReference type="SUPFAM" id="SSF57424">
    <property type="entry name" value="LDL receptor-like module"/>
    <property type="match status" value="3"/>
</dbReference>
<dbReference type="PROSITE" id="PS01209">
    <property type="entry name" value="LDLRA_1"/>
    <property type="match status" value="3"/>
</dbReference>
<dbReference type="PROSITE" id="PS50068">
    <property type="entry name" value="LDLRA_2"/>
    <property type="match status" value="3"/>
</dbReference>
<gene>
    <name evidence="13" type="primary">LDLRAD3</name>
    <name type="synonym">LRAD3</name>
</gene>
<organism>
    <name type="scientific">Homo sapiens</name>
    <name type="common">Human</name>
    <dbReference type="NCBI Taxonomy" id="9606"/>
    <lineage>
        <taxon>Eukaryota</taxon>
        <taxon>Metazoa</taxon>
        <taxon>Chordata</taxon>
        <taxon>Craniata</taxon>
        <taxon>Vertebrata</taxon>
        <taxon>Euteleostomi</taxon>
        <taxon>Mammalia</taxon>
        <taxon>Eutheria</taxon>
        <taxon>Euarchontoglires</taxon>
        <taxon>Primates</taxon>
        <taxon>Haplorrhini</taxon>
        <taxon>Catarrhini</taxon>
        <taxon>Hominidae</taxon>
        <taxon>Homo</taxon>
    </lineage>
</organism>
<name>LRAD3_HUMAN</name>